<reference key="1">
    <citation type="journal article" date="2010" name="J. Bacteriol.">
        <title>Whole genome sequences of two Xylella fastidiosa strains (M12 and M23) causing almond leaf scorch disease in California.</title>
        <authorList>
            <person name="Chen J."/>
            <person name="Xie G."/>
            <person name="Han S."/>
            <person name="Chertkov O."/>
            <person name="Sims D."/>
            <person name="Civerolo E.L."/>
        </authorList>
    </citation>
    <scope>NUCLEOTIDE SEQUENCE [LARGE SCALE GENOMIC DNA]</scope>
    <source>
        <strain>M23</strain>
    </source>
</reference>
<dbReference type="EC" id="2.8.1.13" evidence="1"/>
<dbReference type="EMBL" id="CP001011">
    <property type="protein sequence ID" value="ACB92137.1"/>
    <property type="molecule type" value="Genomic_DNA"/>
</dbReference>
<dbReference type="RefSeq" id="WP_011097736.1">
    <property type="nucleotide sequence ID" value="NC_010577.1"/>
</dbReference>
<dbReference type="SMR" id="B2I9X8"/>
<dbReference type="GeneID" id="93904440"/>
<dbReference type="KEGG" id="xfn:XfasM23_0696"/>
<dbReference type="HOGENOM" id="CLU_035188_1_0_6"/>
<dbReference type="Proteomes" id="UP000001698">
    <property type="component" value="Chromosome"/>
</dbReference>
<dbReference type="GO" id="GO:0005737">
    <property type="term" value="C:cytoplasm"/>
    <property type="evidence" value="ECO:0007669"/>
    <property type="project" value="UniProtKB-SubCell"/>
</dbReference>
<dbReference type="GO" id="GO:0005524">
    <property type="term" value="F:ATP binding"/>
    <property type="evidence" value="ECO:0007669"/>
    <property type="project" value="UniProtKB-KW"/>
</dbReference>
<dbReference type="GO" id="GO:0000049">
    <property type="term" value="F:tRNA binding"/>
    <property type="evidence" value="ECO:0007669"/>
    <property type="project" value="UniProtKB-KW"/>
</dbReference>
<dbReference type="GO" id="GO:0103016">
    <property type="term" value="F:tRNA-uridine 2-sulfurtransferase activity"/>
    <property type="evidence" value="ECO:0007669"/>
    <property type="project" value="UniProtKB-EC"/>
</dbReference>
<dbReference type="GO" id="GO:0002143">
    <property type="term" value="P:tRNA wobble position uridine thiolation"/>
    <property type="evidence" value="ECO:0007669"/>
    <property type="project" value="TreeGrafter"/>
</dbReference>
<dbReference type="CDD" id="cd01998">
    <property type="entry name" value="MnmA_TRMU-like"/>
    <property type="match status" value="1"/>
</dbReference>
<dbReference type="FunFam" id="2.30.30.280:FF:000001">
    <property type="entry name" value="tRNA-specific 2-thiouridylase MnmA"/>
    <property type="match status" value="1"/>
</dbReference>
<dbReference type="FunFam" id="2.40.30.10:FF:000023">
    <property type="entry name" value="tRNA-specific 2-thiouridylase MnmA"/>
    <property type="match status" value="1"/>
</dbReference>
<dbReference type="FunFam" id="3.40.50.620:FF:000004">
    <property type="entry name" value="tRNA-specific 2-thiouridylase MnmA"/>
    <property type="match status" value="1"/>
</dbReference>
<dbReference type="Gene3D" id="2.30.30.280">
    <property type="entry name" value="Adenine nucleotide alpha hydrolases-like domains"/>
    <property type="match status" value="1"/>
</dbReference>
<dbReference type="Gene3D" id="3.40.50.620">
    <property type="entry name" value="HUPs"/>
    <property type="match status" value="1"/>
</dbReference>
<dbReference type="Gene3D" id="2.40.30.10">
    <property type="entry name" value="Translation factors"/>
    <property type="match status" value="1"/>
</dbReference>
<dbReference type="HAMAP" id="MF_00144">
    <property type="entry name" value="tRNA_thiouridyl_MnmA"/>
    <property type="match status" value="1"/>
</dbReference>
<dbReference type="InterPro" id="IPR004506">
    <property type="entry name" value="MnmA-like"/>
</dbReference>
<dbReference type="InterPro" id="IPR046885">
    <property type="entry name" value="MnmA-like_C"/>
</dbReference>
<dbReference type="InterPro" id="IPR046884">
    <property type="entry name" value="MnmA-like_central"/>
</dbReference>
<dbReference type="InterPro" id="IPR023382">
    <property type="entry name" value="MnmA-like_central_sf"/>
</dbReference>
<dbReference type="InterPro" id="IPR014729">
    <property type="entry name" value="Rossmann-like_a/b/a_fold"/>
</dbReference>
<dbReference type="NCBIfam" id="NF001138">
    <property type="entry name" value="PRK00143.1"/>
    <property type="match status" value="1"/>
</dbReference>
<dbReference type="NCBIfam" id="TIGR00420">
    <property type="entry name" value="trmU"/>
    <property type="match status" value="1"/>
</dbReference>
<dbReference type="PANTHER" id="PTHR11933:SF5">
    <property type="entry name" value="MITOCHONDRIAL TRNA-SPECIFIC 2-THIOURIDYLASE 1"/>
    <property type="match status" value="1"/>
</dbReference>
<dbReference type="PANTHER" id="PTHR11933">
    <property type="entry name" value="TRNA 5-METHYLAMINOMETHYL-2-THIOURIDYLATE -METHYLTRANSFERASE"/>
    <property type="match status" value="1"/>
</dbReference>
<dbReference type="Pfam" id="PF03054">
    <property type="entry name" value="tRNA_Me_trans"/>
    <property type="match status" value="1"/>
</dbReference>
<dbReference type="Pfam" id="PF20258">
    <property type="entry name" value="tRNA_Me_trans_C"/>
    <property type="match status" value="1"/>
</dbReference>
<dbReference type="Pfam" id="PF20259">
    <property type="entry name" value="tRNA_Me_trans_M"/>
    <property type="match status" value="1"/>
</dbReference>
<dbReference type="SUPFAM" id="SSF52402">
    <property type="entry name" value="Adenine nucleotide alpha hydrolases-like"/>
    <property type="match status" value="1"/>
</dbReference>
<evidence type="ECO:0000255" key="1">
    <source>
        <dbReference type="HAMAP-Rule" id="MF_00144"/>
    </source>
</evidence>
<name>MNMA_XYLF2</name>
<feature type="chain" id="PRO_0000349861" description="tRNA-specific 2-thiouridylase MnmA">
    <location>
        <begin position="1"/>
        <end position="379"/>
    </location>
</feature>
<feature type="region of interest" description="Interaction with target base in tRNA" evidence="1">
    <location>
        <begin position="94"/>
        <end position="96"/>
    </location>
</feature>
<feature type="region of interest" description="Interaction with tRNA" evidence="1">
    <location>
        <begin position="145"/>
        <end position="147"/>
    </location>
</feature>
<feature type="region of interest" description="Interaction with tRNA" evidence="1">
    <location>
        <begin position="307"/>
        <end position="308"/>
    </location>
</feature>
<feature type="active site" description="Nucleophile" evidence="1">
    <location>
        <position position="99"/>
    </location>
</feature>
<feature type="active site" description="Cysteine persulfide intermediate" evidence="1">
    <location>
        <position position="195"/>
    </location>
</feature>
<feature type="binding site" evidence="1">
    <location>
        <begin position="9"/>
        <end position="16"/>
    </location>
    <ligand>
        <name>ATP</name>
        <dbReference type="ChEBI" id="CHEBI:30616"/>
    </ligand>
</feature>
<feature type="binding site" evidence="1">
    <location>
        <position position="35"/>
    </location>
    <ligand>
        <name>ATP</name>
        <dbReference type="ChEBI" id="CHEBI:30616"/>
    </ligand>
</feature>
<feature type="binding site" evidence="1">
    <location>
        <position position="123"/>
    </location>
    <ligand>
        <name>ATP</name>
        <dbReference type="ChEBI" id="CHEBI:30616"/>
    </ligand>
</feature>
<feature type="site" description="Interaction with tRNA" evidence="1">
    <location>
        <position position="124"/>
    </location>
</feature>
<feature type="site" description="Interaction with tRNA" evidence="1">
    <location>
        <position position="340"/>
    </location>
</feature>
<feature type="disulfide bond" description="Alternate" evidence="1">
    <location>
        <begin position="99"/>
        <end position="195"/>
    </location>
</feature>
<proteinExistence type="inferred from homology"/>
<sequence length="379" mass="43086">MNTPRIIVAMSGGVDSSVAAWRLNSQREAIAGLFMRNWTDDGNGQCHAEEDRRDAVAVCGILGIAFHFRDFSHEYWQEVFTHFLAEYANGRTPNPDVLCNREIKFKHFLETARELGADRIATGHYARIEHYRQRWHLLRGADRSKDQSYFLHQLGQEQLAATLFPIGDLEKQQLRQLAHQTGLPTHAKKDSTGICFIGERNFREFLKQYLPAQPGEIRDPQEQRIAEHPGVFYFTLGQRQGLNIGGVRNRPPSPWYVIGKDLATNVLYVDQHRDSPFLQSRWLRSEPAHWVSGSPPAPTFTCTAQTRYRQADEPCKVTVRNDGSLDVDFTRTQWAVTPGQSLVLYDGNECLGGAVIATTDAPLERKRARNLSKTENVLQ</sequence>
<accession>B2I9X8</accession>
<keyword id="KW-0067">ATP-binding</keyword>
<keyword id="KW-0963">Cytoplasm</keyword>
<keyword id="KW-1015">Disulfide bond</keyword>
<keyword id="KW-0547">Nucleotide-binding</keyword>
<keyword id="KW-0694">RNA-binding</keyword>
<keyword id="KW-0808">Transferase</keyword>
<keyword id="KW-0819">tRNA processing</keyword>
<keyword id="KW-0820">tRNA-binding</keyword>
<organism>
    <name type="scientific">Xylella fastidiosa (strain M23)</name>
    <dbReference type="NCBI Taxonomy" id="405441"/>
    <lineage>
        <taxon>Bacteria</taxon>
        <taxon>Pseudomonadati</taxon>
        <taxon>Pseudomonadota</taxon>
        <taxon>Gammaproteobacteria</taxon>
        <taxon>Lysobacterales</taxon>
        <taxon>Lysobacteraceae</taxon>
        <taxon>Xylella</taxon>
    </lineage>
</organism>
<gene>
    <name evidence="1" type="primary">mnmA</name>
    <name type="ordered locus">XfasM23_0696</name>
</gene>
<comment type="function">
    <text evidence="1">Catalyzes the 2-thiolation of uridine at the wobble position (U34) of tRNA, leading to the formation of s(2)U34.</text>
</comment>
<comment type="catalytic activity">
    <reaction evidence="1">
        <text>S-sulfanyl-L-cysteinyl-[protein] + uridine(34) in tRNA + AH2 + ATP = 2-thiouridine(34) in tRNA + L-cysteinyl-[protein] + A + AMP + diphosphate + H(+)</text>
        <dbReference type="Rhea" id="RHEA:47032"/>
        <dbReference type="Rhea" id="RHEA-COMP:10131"/>
        <dbReference type="Rhea" id="RHEA-COMP:11726"/>
        <dbReference type="Rhea" id="RHEA-COMP:11727"/>
        <dbReference type="Rhea" id="RHEA-COMP:11728"/>
        <dbReference type="ChEBI" id="CHEBI:13193"/>
        <dbReference type="ChEBI" id="CHEBI:15378"/>
        <dbReference type="ChEBI" id="CHEBI:17499"/>
        <dbReference type="ChEBI" id="CHEBI:29950"/>
        <dbReference type="ChEBI" id="CHEBI:30616"/>
        <dbReference type="ChEBI" id="CHEBI:33019"/>
        <dbReference type="ChEBI" id="CHEBI:61963"/>
        <dbReference type="ChEBI" id="CHEBI:65315"/>
        <dbReference type="ChEBI" id="CHEBI:87170"/>
        <dbReference type="ChEBI" id="CHEBI:456215"/>
        <dbReference type="EC" id="2.8.1.13"/>
    </reaction>
</comment>
<comment type="subcellular location">
    <subcellularLocation>
        <location evidence="1">Cytoplasm</location>
    </subcellularLocation>
</comment>
<comment type="similarity">
    <text evidence="1">Belongs to the MnmA/TRMU family.</text>
</comment>
<protein>
    <recommendedName>
        <fullName evidence="1">tRNA-specific 2-thiouridylase MnmA</fullName>
        <ecNumber evidence="1">2.8.1.13</ecNumber>
    </recommendedName>
</protein>